<keyword id="KW-0028">Amino-acid biosynthesis</keyword>
<keyword id="KW-0378">Hydrolase</keyword>
<keyword id="KW-0486">Methionine biosynthesis</keyword>
<keyword id="KW-1185">Reference proteome</keyword>
<accession>Q5L1E1</accession>
<reference key="1">
    <citation type="journal article" date="2004" name="Nucleic Acids Res.">
        <title>Thermoadaptation trait revealed by the genome sequence of thermophilic Geobacillus kaustophilus.</title>
        <authorList>
            <person name="Takami H."/>
            <person name="Takaki Y."/>
            <person name="Chee G.-J."/>
            <person name="Nishi S."/>
            <person name="Shimamura S."/>
            <person name="Suzuki H."/>
            <person name="Matsui S."/>
            <person name="Uchiyama I."/>
        </authorList>
    </citation>
    <scope>NUCLEOTIDE SEQUENCE [LARGE SCALE GENOMIC DNA]</scope>
    <source>
        <strain>HTA426</strain>
    </source>
</reference>
<organism>
    <name type="scientific">Geobacillus kaustophilus (strain HTA426)</name>
    <dbReference type="NCBI Taxonomy" id="235909"/>
    <lineage>
        <taxon>Bacteria</taxon>
        <taxon>Bacillati</taxon>
        <taxon>Bacillota</taxon>
        <taxon>Bacilli</taxon>
        <taxon>Bacillales</taxon>
        <taxon>Anoxybacillaceae</taxon>
        <taxon>Geobacillus</taxon>
        <taxon>Geobacillus thermoleovorans group</taxon>
    </lineage>
</organism>
<proteinExistence type="inferred from homology"/>
<dbReference type="EC" id="3.1.3.87" evidence="1"/>
<dbReference type="EMBL" id="BA000043">
    <property type="protein sequence ID" value="BAD75239.1"/>
    <property type="molecule type" value="Genomic_DNA"/>
</dbReference>
<dbReference type="RefSeq" id="WP_011230455.1">
    <property type="nucleotide sequence ID" value="NC_006510.1"/>
</dbReference>
<dbReference type="SMR" id="Q5L1E1"/>
<dbReference type="STRING" id="235909.GK0954"/>
<dbReference type="KEGG" id="gka:GK0954"/>
<dbReference type="PATRIC" id="fig|235909.7.peg.1042"/>
<dbReference type="eggNOG" id="COG4359">
    <property type="taxonomic scope" value="Bacteria"/>
</dbReference>
<dbReference type="HOGENOM" id="CLU_058495_2_1_9"/>
<dbReference type="UniPathway" id="UPA00904">
    <property type="reaction ID" value="UER00877"/>
</dbReference>
<dbReference type="Proteomes" id="UP000001172">
    <property type="component" value="Chromosome"/>
</dbReference>
<dbReference type="GO" id="GO:0005737">
    <property type="term" value="C:cytoplasm"/>
    <property type="evidence" value="ECO:0007669"/>
    <property type="project" value="TreeGrafter"/>
</dbReference>
<dbReference type="GO" id="GO:0043716">
    <property type="term" value="F:2-hydroxy-3-keto-5-methylthiopentenyl-1-phosphate phosphatase activity"/>
    <property type="evidence" value="ECO:0007669"/>
    <property type="project" value="UniProtKB-UniRule"/>
</dbReference>
<dbReference type="GO" id="GO:0036424">
    <property type="term" value="F:L-phosphoserine phosphatase activity"/>
    <property type="evidence" value="ECO:0007669"/>
    <property type="project" value="TreeGrafter"/>
</dbReference>
<dbReference type="GO" id="GO:0000287">
    <property type="term" value="F:magnesium ion binding"/>
    <property type="evidence" value="ECO:0007669"/>
    <property type="project" value="TreeGrafter"/>
</dbReference>
<dbReference type="GO" id="GO:0019509">
    <property type="term" value="P:L-methionine salvage from methylthioadenosine"/>
    <property type="evidence" value="ECO:0007669"/>
    <property type="project" value="UniProtKB-UniRule"/>
</dbReference>
<dbReference type="GO" id="GO:0006564">
    <property type="term" value="P:L-serine biosynthetic process"/>
    <property type="evidence" value="ECO:0007669"/>
    <property type="project" value="TreeGrafter"/>
</dbReference>
<dbReference type="CDD" id="cd07524">
    <property type="entry name" value="HAD_Pase"/>
    <property type="match status" value="1"/>
</dbReference>
<dbReference type="Gene3D" id="3.90.1470.20">
    <property type="match status" value="1"/>
</dbReference>
<dbReference type="Gene3D" id="3.40.50.1000">
    <property type="entry name" value="HAD superfamily/HAD-like"/>
    <property type="match status" value="1"/>
</dbReference>
<dbReference type="HAMAP" id="MF_01680">
    <property type="entry name" value="Salvage_MtnX"/>
    <property type="match status" value="1"/>
</dbReference>
<dbReference type="InterPro" id="IPR050582">
    <property type="entry name" value="HAD-like_SerB"/>
</dbReference>
<dbReference type="InterPro" id="IPR036412">
    <property type="entry name" value="HAD-like_sf"/>
</dbReference>
<dbReference type="InterPro" id="IPR017718">
    <property type="entry name" value="HAD-SF_hydro_IB_MtnX"/>
</dbReference>
<dbReference type="InterPro" id="IPR006384">
    <property type="entry name" value="HAD_hydro_PyrdxlP_Pase-like"/>
</dbReference>
<dbReference type="InterPro" id="IPR023214">
    <property type="entry name" value="HAD_sf"/>
</dbReference>
<dbReference type="NCBIfam" id="TIGR01489">
    <property type="entry name" value="DKMTPPase-SF"/>
    <property type="match status" value="1"/>
</dbReference>
<dbReference type="NCBIfam" id="TIGR01488">
    <property type="entry name" value="HAD-SF-IB"/>
    <property type="match status" value="1"/>
</dbReference>
<dbReference type="NCBIfam" id="NF007103">
    <property type="entry name" value="PRK09552.1"/>
    <property type="match status" value="1"/>
</dbReference>
<dbReference type="NCBIfam" id="TIGR03333">
    <property type="entry name" value="salvage_mtnX"/>
    <property type="match status" value="1"/>
</dbReference>
<dbReference type="PANTHER" id="PTHR43344">
    <property type="entry name" value="PHOSPHOSERINE PHOSPHATASE"/>
    <property type="match status" value="1"/>
</dbReference>
<dbReference type="PANTHER" id="PTHR43344:SF21">
    <property type="entry name" value="POLYOL PHOSPHATE PHOSPHATASE PYP1"/>
    <property type="match status" value="1"/>
</dbReference>
<dbReference type="Pfam" id="PF12710">
    <property type="entry name" value="HAD"/>
    <property type="match status" value="1"/>
</dbReference>
<dbReference type="SUPFAM" id="SSF56784">
    <property type="entry name" value="HAD-like"/>
    <property type="match status" value="1"/>
</dbReference>
<sequence length="220" mass="24690">MTKQLVLFCDFDGTITENDNIIAIMKQFAPPEWEALKDDILAERISVQEGVGKMFSLLPSSLKGEIIDFLRRTTRLRAGFREFVAFTKERGIPLYIVSGGIDFFVYPLLEGLIEPERIFCNGSDFSGETIRITWPHACDGECQNGCGCCKPSLLRKLARPDGYHVVIGDSITDLAVAKQADYVMARDFLLQKCQELGLPHAPFATFFDVIDALQRMEVIV</sequence>
<name>MTNX_GEOKA</name>
<evidence type="ECO:0000255" key="1">
    <source>
        <dbReference type="HAMAP-Rule" id="MF_01680"/>
    </source>
</evidence>
<protein>
    <recommendedName>
        <fullName evidence="1">2-hydroxy-3-keto-5-methylthiopentenyl-1-phosphate phosphatase</fullName>
        <shortName evidence="1">HK-MTPenyl-1-P phosphatase</shortName>
        <ecNumber evidence="1">3.1.3.87</ecNumber>
    </recommendedName>
</protein>
<comment type="function">
    <text evidence="1">Dephosphorylates 2-hydroxy-3-keto-5-methylthiopentenyl-1-phosphate (HK-MTPenyl-1-P) yielding 1,2-dihydroxy-3-keto-5-methylthiopentene (DHK-MTPene).</text>
</comment>
<comment type="catalytic activity">
    <reaction evidence="1">
        <text>2-hydroxy-5-methylsulfanyl-3-oxopent-1-enyl phosphate + H2O = 1,2-dihydroxy-5-(methylsulfanyl)pent-1-en-3-one + phosphate</text>
        <dbReference type="Rhea" id="RHEA:14481"/>
        <dbReference type="ChEBI" id="CHEBI:15377"/>
        <dbReference type="ChEBI" id="CHEBI:43474"/>
        <dbReference type="ChEBI" id="CHEBI:49252"/>
        <dbReference type="ChEBI" id="CHEBI:59505"/>
        <dbReference type="EC" id="3.1.3.87"/>
    </reaction>
</comment>
<comment type="pathway">
    <text evidence="1">Amino-acid biosynthesis; L-methionine biosynthesis via salvage pathway; L-methionine from S-methyl-5-thio-alpha-D-ribose 1-phosphate: step 4/6.</text>
</comment>
<comment type="similarity">
    <text evidence="1">Belongs to the HAD-like hydrolase superfamily. MtnX family.</text>
</comment>
<gene>
    <name evidence="1" type="primary">mtnX</name>
    <name type="ordered locus">GK0954</name>
</gene>
<feature type="chain" id="PRO_0000357485" description="2-hydroxy-3-keto-5-methylthiopentenyl-1-phosphate phosphatase">
    <location>
        <begin position="1"/>
        <end position="220"/>
    </location>
</feature>